<comment type="function">
    <text evidence="1">Catalyzes the condensation of ATP and 5-phosphoribose 1-diphosphate to form N'-(5'-phosphoribosyl)-ATP (PR-ATP). Has a crucial role in the pathway because the rate of histidine biosynthesis seems to be controlled primarily by regulation of HisG enzymatic activity.</text>
</comment>
<comment type="catalytic activity">
    <reaction evidence="1">
        <text>1-(5-phospho-beta-D-ribosyl)-ATP + diphosphate = 5-phospho-alpha-D-ribose 1-diphosphate + ATP</text>
        <dbReference type="Rhea" id="RHEA:18473"/>
        <dbReference type="ChEBI" id="CHEBI:30616"/>
        <dbReference type="ChEBI" id="CHEBI:33019"/>
        <dbReference type="ChEBI" id="CHEBI:58017"/>
        <dbReference type="ChEBI" id="CHEBI:73183"/>
        <dbReference type="EC" id="2.4.2.17"/>
    </reaction>
</comment>
<comment type="pathway">
    <text evidence="1">Amino-acid biosynthesis; L-histidine biosynthesis; L-histidine from 5-phospho-alpha-D-ribose 1-diphosphate: step 1/9.</text>
</comment>
<comment type="subunit">
    <text evidence="1">Heteromultimer composed of HisG and HisZ subunits.</text>
</comment>
<comment type="subcellular location">
    <subcellularLocation>
        <location evidence="1">Cytoplasm</location>
    </subcellularLocation>
</comment>
<comment type="domain">
    <text>Lacks the C-terminal regulatory region which is replaced by HisZ.</text>
</comment>
<comment type="similarity">
    <text evidence="1">Belongs to the ATP phosphoribosyltransferase family. Short subfamily.</text>
</comment>
<gene>
    <name evidence="1" type="primary">hisG</name>
    <name type="ordered locus">Vapar_1164</name>
</gene>
<accession>C5CQI9</accession>
<proteinExistence type="inferred from homology"/>
<feature type="chain" id="PRO_1000213281" description="ATP phosphoribosyltransferase">
    <location>
        <begin position="1"/>
        <end position="213"/>
    </location>
</feature>
<dbReference type="EC" id="2.4.2.17" evidence="1"/>
<dbReference type="EMBL" id="CP001635">
    <property type="protein sequence ID" value="ACS17815.1"/>
    <property type="molecule type" value="Genomic_DNA"/>
</dbReference>
<dbReference type="SMR" id="C5CQI9"/>
<dbReference type="STRING" id="543728.Vapar_1164"/>
<dbReference type="KEGG" id="vap:Vapar_1164"/>
<dbReference type="eggNOG" id="COG0040">
    <property type="taxonomic scope" value="Bacteria"/>
</dbReference>
<dbReference type="HOGENOM" id="CLU_038115_2_0_4"/>
<dbReference type="OrthoDB" id="9801867at2"/>
<dbReference type="UniPathway" id="UPA00031">
    <property type="reaction ID" value="UER00006"/>
</dbReference>
<dbReference type="GO" id="GO:0005737">
    <property type="term" value="C:cytoplasm"/>
    <property type="evidence" value="ECO:0007669"/>
    <property type="project" value="UniProtKB-SubCell"/>
</dbReference>
<dbReference type="GO" id="GO:0005524">
    <property type="term" value="F:ATP binding"/>
    <property type="evidence" value="ECO:0007669"/>
    <property type="project" value="UniProtKB-KW"/>
</dbReference>
<dbReference type="GO" id="GO:0003879">
    <property type="term" value="F:ATP phosphoribosyltransferase activity"/>
    <property type="evidence" value="ECO:0007669"/>
    <property type="project" value="UniProtKB-UniRule"/>
</dbReference>
<dbReference type="GO" id="GO:0000105">
    <property type="term" value="P:L-histidine biosynthetic process"/>
    <property type="evidence" value="ECO:0007669"/>
    <property type="project" value="UniProtKB-UniRule"/>
</dbReference>
<dbReference type="CDD" id="cd13595">
    <property type="entry name" value="PBP2_HisGs"/>
    <property type="match status" value="1"/>
</dbReference>
<dbReference type="FunFam" id="3.40.190.10:FF:000011">
    <property type="entry name" value="ATP phosphoribosyltransferase"/>
    <property type="match status" value="1"/>
</dbReference>
<dbReference type="Gene3D" id="3.40.190.10">
    <property type="entry name" value="Periplasmic binding protein-like II"/>
    <property type="match status" value="2"/>
</dbReference>
<dbReference type="HAMAP" id="MF_01018">
    <property type="entry name" value="HisG_Short"/>
    <property type="match status" value="1"/>
</dbReference>
<dbReference type="InterPro" id="IPR013820">
    <property type="entry name" value="ATP_PRibTrfase_cat"/>
</dbReference>
<dbReference type="InterPro" id="IPR018198">
    <property type="entry name" value="ATP_PRibTrfase_CS"/>
</dbReference>
<dbReference type="InterPro" id="IPR001348">
    <property type="entry name" value="ATP_PRibTrfase_HisG"/>
</dbReference>
<dbReference type="InterPro" id="IPR024893">
    <property type="entry name" value="ATP_PRibTrfase_HisG_short"/>
</dbReference>
<dbReference type="NCBIfam" id="TIGR00070">
    <property type="entry name" value="hisG"/>
    <property type="match status" value="1"/>
</dbReference>
<dbReference type="PANTHER" id="PTHR21403:SF8">
    <property type="entry name" value="ATP PHOSPHORIBOSYLTRANSFERASE"/>
    <property type="match status" value="1"/>
</dbReference>
<dbReference type="PANTHER" id="PTHR21403">
    <property type="entry name" value="ATP PHOSPHORIBOSYLTRANSFERASE ATP-PRTASE"/>
    <property type="match status" value="1"/>
</dbReference>
<dbReference type="Pfam" id="PF01634">
    <property type="entry name" value="HisG"/>
    <property type="match status" value="1"/>
</dbReference>
<dbReference type="SUPFAM" id="SSF53850">
    <property type="entry name" value="Periplasmic binding protein-like II"/>
    <property type="match status" value="1"/>
</dbReference>
<dbReference type="PROSITE" id="PS01316">
    <property type="entry name" value="ATP_P_PHORIBOSYLTR"/>
    <property type="match status" value="1"/>
</dbReference>
<name>HIS1_VARPS</name>
<reference key="1">
    <citation type="journal article" date="2011" name="J. Bacteriol.">
        <title>Complete genome sequence of the metabolically versatile plant growth-promoting endophyte, Variovorax paradoxus S110.</title>
        <authorList>
            <person name="Han J.I."/>
            <person name="Choi H.K."/>
            <person name="Lee S.W."/>
            <person name="Orwin P.M."/>
            <person name="Kim J."/>
            <person name="Laroe S.L."/>
            <person name="Kim T.G."/>
            <person name="O'Neil J."/>
            <person name="Leadbetter J.R."/>
            <person name="Lee S.Y."/>
            <person name="Hur C.G."/>
            <person name="Spain J.C."/>
            <person name="Ovchinnikova G."/>
            <person name="Goodwin L."/>
            <person name="Han C."/>
        </authorList>
    </citation>
    <scope>NUCLEOTIDE SEQUENCE [LARGE SCALE GENOMIC DNA]</scope>
    <source>
        <strain>S110</strain>
    </source>
</reference>
<protein>
    <recommendedName>
        <fullName evidence="1">ATP phosphoribosyltransferase</fullName>
        <shortName evidence="1">ATP-PRT</shortName>
        <shortName evidence="1">ATP-PRTase</shortName>
        <ecNumber evidence="1">2.4.2.17</ecNumber>
    </recommendedName>
</protein>
<sequence>MITLALSKGRIFEETMPLLAAAGIEVTEDPEKSRKLILATTRPDVRVVLVRASDVPTYVQYGGADLGVTGLDVLLENGNQGMYQPLDLRIAACRLSVAVRADYDYASAVKQGSRLRVATKYVGLAREFFASKGVHVDLIKLYGSMELAPLTGLADAIVDLVSTGNTLKANHLVEVERIMDISARLVVNQAALKLKREPIRRIIDAFASAIPTA</sequence>
<organism>
    <name type="scientific">Variovorax paradoxus (strain S110)</name>
    <dbReference type="NCBI Taxonomy" id="543728"/>
    <lineage>
        <taxon>Bacteria</taxon>
        <taxon>Pseudomonadati</taxon>
        <taxon>Pseudomonadota</taxon>
        <taxon>Betaproteobacteria</taxon>
        <taxon>Burkholderiales</taxon>
        <taxon>Comamonadaceae</taxon>
        <taxon>Variovorax</taxon>
    </lineage>
</organism>
<evidence type="ECO:0000255" key="1">
    <source>
        <dbReference type="HAMAP-Rule" id="MF_01018"/>
    </source>
</evidence>
<keyword id="KW-0028">Amino-acid biosynthesis</keyword>
<keyword id="KW-0067">ATP-binding</keyword>
<keyword id="KW-0963">Cytoplasm</keyword>
<keyword id="KW-0328">Glycosyltransferase</keyword>
<keyword id="KW-0368">Histidine biosynthesis</keyword>
<keyword id="KW-0547">Nucleotide-binding</keyword>
<keyword id="KW-0808">Transferase</keyword>